<reference key="1">
    <citation type="journal article" date="2008" name="Genome Res.">
        <title>The genome of Pelotomaculum thermopropionicum reveals niche-associated evolution in anaerobic microbiota.</title>
        <authorList>
            <person name="Kosaka T."/>
            <person name="Kato S."/>
            <person name="Shimoyama T."/>
            <person name="Ishii S."/>
            <person name="Abe T."/>
            <person name="Watanabe K."/>
        </authorList>
    </citation>
    <scope>NUCLEOTIDE SEQUENCE [LARGE SCALE GENOMIC DNA]</scope>
    <source>
        <strain>DSM 13744 / JCM 10971 / SI</strain>
    </source>
</reference>
<proteinExistence type="inferred from homology"/>
<accession>A5D2S6</accession>
<protein>
    <recommendedName>
        <fullName evidence="1">Polyribonucleotide nucleotidyltransferase</fullName>
        <ecNumber evidence="1">2.7.7.8</ecNumber>
    </recommendedName>
    <alternativeName>
        <fullName evidence="1">Polynucleotide phosphorylase</fullName>
        <shortName evidence="1">PNPase</shortName>
    </alternativeName>
</protein>
<dbReference type="EC" id="2.7.7.8" evidence="1"/>
<dbReference type="EMBL" id="AP009389">
    <property type="protein sequence ID" value="BAF59456.1"/>
    <property type="molecule type" value="Genomic_DNA"/>
</dbReference>
<dbReference type="SMR" id="A5D2S6"/>
<dbReference type="STRING" id="370438.PTH_1275"/>
<dbReference type="KEGG" id="pth:PTH_1275"/>
<dbReference type="eggNOG" id="COG1185">
    <property type="taxonomic scope" value="Bacteria"/>
</dbReference>
<dbReference type="HOGENOM" id="CLU_004217_2_2_9"/>
<dbReference type="Proteomes" id="UP000006556">
    <property type="component" value="Chromosome"/>
</dbReference>
<dbReference type="GO" id="GO:0005829">
    <property type="term" value="C:cytosol"/>
    <property type="evidence" value="ECO:0007669"/>
    <property type="project" value="TreeGrafter"/>
</dbReference>
<dbReference type="GO" id="GO:0000175">
    <property type="term" value="F:3'-5'-RNA exonuclease activity"/>
    <property type="evidence" value="ECO:0007669"/>
    <property type="project" value="TreeGrafter"/>
</dbReference>
<dbReference type="GO" id="GO:0000287">
    <property type="term" value="F:magnesium ion binding"/>
    <property type="evidence" value="ECO:0007669"/>
    <property type="project" value="UniProtKB-UniRule"/>
</dbReference>
<dbReference type="GO" id="GO:0004654">
    <property type="term" value="F:polyribonucleotide nucleotidyltransferase activity"/>
    <property type="evidence" value="ECO:0007669"/>
    <property type="project" value="UniProtKB-UniRule"/>
</dbReference>
<dbReference type="GO" id="GO:0003723">
    <property type="term" value="F:RNA binding"/>
    <property type="evidence" value="ECO:0007669"/>
    <property type="project" value="UniProtKB-UniRule"/>
</dbReference>
<dbReference type="GO" id="GO:0006402">
    <property type="term" value="P:mRNA catabolic process"/>
    <property type="evidence" value="ECO:0007669"/>
    <property type="project" value="UniProtKB-UniRule"/>
</dbReference>
<dbReference type="GO" id="GO:0006396">
    <property type="term" value="P:RNA processing"/>
    <property type="evidence" value="ECO:0007669"/>
    <property type="project" value="InterPro"/>
</dbReference>
<dbReference type="CDD" id="cd02393">
    <property type="entry name" value="KH-I_PNPase"/>
    <property type="match status" value="1"/>
</dbReference>
<dbReference type="CDD" id="cd11363">
    <property type="entry name" value="RNase_PH_PNPase_1"/>
    <property type="match status" value="1"/>
</dbReference>
<dbReference type="CDD" id="cd11364">
    <property type="entry name" value="RNase_PH_PNPase_2"/>
    <property type="match status" value="1"/>
</dbReference>
<dbReference type="CDD" id="cd04472">
    <property type="entry name" value="S1_PNPase"/>
    <property type="match status" value="1"/>
</dbReference>
<dbReference type="FunFam" id="3.30.1370.10:FF:000001">
    <property type="entry name" value="Polyribonucleotide nucleotidyltransferase"/>
    <property type="match status" value="1"/>
</dbReference>
<dbReference type="FunFam" id="3.30.230.70:FF:000001">
    <property type="entry name" value="Polyribonucleotide nucleotidyltransferase"/>
    <property type="match status" value="1"/>
</dbReference>
<dbReference type="FunFam" id="3.30.230.70:FF:000002">
    <property type="entry name" value="Polyribonucleotide nucleotidyltransferase"/>
    <property type="match status" value="1"/>
</dbReference>
<dbReference type="Gene3D" id="3.30.230.70">
    <property type="entry name" value="GHMP Kinase, N-terminal domain"/>
    <property type="match status" value="2"/>
</dbReference>
<dbReference type="Gene3D" id="3.30.1370.10">
    <property type="entry name" value="K Homology domain, type 1"/>
    <property type="match status" value="1"/>
</dbReference>
<dbReference type="Gene3D" id="2.40.50.140">
    <property type="entry name" value="Nucleic acid-binding proteins"/>
    <property type="match status" value="1"/>
</dbReference>
<dbReference type="HAMAP" id="MF_01595">
    <property type="entry name" value="PNPase"/>
    <property type="match status" value="1"/>
</dbReference>
<dbReference type="InterPro" id="IPR001247">
    <property type="entry name" value="ExoRNase_PH_dom1"/>
</dbReference>
<dbReference type="InterPro" id="IPR015847">
    <property type="entry name" value="ExoRNase_PH_dom2"/>
</dbReference>
<dbReference type="InterPro" id="IPR036345">
    <property type="entry name" value="ExoRNase_PH_dom2_sf"/>
</dbReference>
<dbReference type="InterPro" id="IPR004087">
    <property type="entry name" value="KH_dom"/>
</dbReference>
<dbReference type="InterPro" id="IPR004088">
    <property type="entry name" value="KH_dom_type_1"/>
</dbReference>
<dbReference type="InterPro" id="IPR036612">
    <property type="entry name" value="KH_dom_type_1_sf"/>
</dbReference>
<dbReference type="InterPro" id="IPR012340">
    <property type="entry name" value="NA-bd_OB-fold"/>
</dbReference>
<dbReference type="InterPro" id="IPR012162">
    <property type="entry name" value="PNPase"/>
</dbReference>
<dbReference type="InterPro" id="IPR027408">
    <property type="entry name" value="PNPase/RNase_PH_dom_sf"/>
</dbReference>
<dbReference type="InterPro" id="IPR015848">
    <property type="entry name" value="PNPase_PH_RNA-bd_bac/org-type"/>
</dbReference>
<dbReference type="InterPro" id="IPR020568">
    <property type="entry name" value="Ribosomal_Su5_D2-typ_SF"/>
</dbReference>
<dbReference type="InterPro" id="IPR003029">
    <property type="entry name" value="S1_domain"/>
</dbReference>
<dbReference type="NCBIfam" id="TIGR03591">
    <property type="entry name" value="polynuc_phos"/>
    <property type="match status" value="1"/>
</dbReference>
<dbReference type="NCBIfam" id="NF008805">
    <property type="entry name" value="PRK11824.1"/>
    <property type="match status" value="1"/>
</dbReference>
<dbReference type="PANTHER" id="PTHR11252">
    <property type="entry name" value="POLYRIBONUCLEOTIDE NUCLEOTIDYLTRANSFERASE"/>
    <property type="match status" value="1"/>
</dbReference>
<dbReference type="PANTHER" id="PTHR11252:SF0">
    <property type="entry name" value="POLYRIBONUCLEOTIDE NUCLEOTIDYLTRANSFERASE 1, MITOCHONDRIAL"/>
    <property type="match status" value="1"/>
</dbReference>
<dbReference type="Pfam" id="PF00013">
    <property type="entry name" value="KH_1"/>
    <property type="match status" value="1"/>
</dbReference>
<dbReference type="Pfam" id="PF03726">
    <property type="entry name" value="PNPase"/>
    <property type="match status" value="1"/>
</dbReference>
<dbReference type="Pfam" id="PF01138">
    <property type="entry name" value="RNase_PH"/>
    <property type="match status" value="2"/>
</dbReference>
<dbReference type="Pfam" id="PF03725">
    <property type="entry name" value="RNase_PH_C"/>
    <property type="match status" value="2"/>
</dbReference>
<dbReference type="Pfam" id="PF00575">
    <property type="entry name" value="S1"/>
    <property type="match status" value="1"/>
</dbReference>
<dbReference type="PIRSF" id="PIRSF005499">
    <property type="entry name" value="PNPase"/>
    <property type="match status" value="1"/>
</dbReference>
<dbReference type="SMART" id="SM00322">
    <property type="entry name" value="KH"/>
    <property type="match status" value="1"/>
</dbReference>
<dbReference type="SMART" id="SM00316">
    <property type="entry name" value="S1"/>
    <property type="match status" value="1"/>
</dbReference>
<dbReference type="SUPFAM" id="SSF54791">
    <property type="entry name" value="Eukaryotic type KH-domain (KH-domain type I)"/>
    <property type="match status" value="1"/>
</dbReference>
<dbReference type="SUPFAM" id="SSF50249">
    <property type="entry name" value="Nucleic acid-binding proteins"/>
    <property type="match status" value="1"/>
</dbReference>
<dbReference type="SUPFAM" id="SSF55666">
    <property type="entry name" value="Ribonuclease PH domain 2-like"/>
    <property type="match status" value="2"/>
</dbReference>
<dbReference type="SUPFAM" id="SSF54211">
    <property type="entry name" value="Ribosomal protein S5 domain 2-like"/>
    <property type="match status" value="2"/>
</dbReference>
<dbReference type="PROSITE" id="PS50084">
    <property type="entry name" value="KH_TYPE_1"/>
    <property type="match status" value="1"/>
</dbReference>
<dbReference type="PROSITE" id="PS50126">
    <property type="entry name" value="S1"/>
    <property type="match status" value="1"/>
</dbReference>
<name>PNP_PELTS</name>
<gene>
    <name evidence="1" type="primary">pnp</name>
    <name type="ordered locus">PTH_1275</name>
</gene>
<evidence type="ECO:0000255" key="1">
    <source>
        <dbReference type="HAMAP-Rule" id="MF_01595"/>
    </source>
</evidence>
<evidence type="ECO:0000256" key="2">
    <source>
        <dbReference type="SAM" id="MobiDB-lite"/>
    </source>
</evidence>
<feature type="chain" id="PRO_0000329755" description="Polyribonucleotide nucleotidyltransferase">
    <location>
        <begin position="1"/>
        <end position="734"/>
    </location>
</feature>
<feature type="domain" description="KH" evidence="1">
    <location>
        <begin position="564"/>
        <end position="623"/>
    </location>
</feature>
<feature type="domain" description="S1 motif" evidence="1">
    <location>
        <begin position="633"/>
        <end position="707"/>
    </location>
</feature>
<feature type="region of interest" description="Disordered" evidence="2">
    <location>
        <begin position="700"/>
        <end position="734"/>
    </location>
</feature>
<feature type="compositionally biased region" description="Basic and acidic residues" evidence="2">
    <location>
        <begin position="717"/>
        <end position="734"/>
    </location>
</feature>
<feature type="binding site" evidence="1">
    <location>
        <position position="497"/>
    </location>
    <ligand>
        <name>Mg(2+)</name>
        <dbReference type="ChEBI" id="CHEBI:18420"/>
    </ligand>
</feature>
<feature type="binding site" evidence="1">
    <location>
        <position position="503"/>
    </location>
    <ligand>
        <name>Mg(2+)</name>
        <dbReference type="ChEBI" id="CHEBI:18420"/>
    </ligand>
</feature>
<comment type="function">
    <text evidence="1">Involved in mRNA degradation. Catalyzes the phosphorolysis of single-stranded polyribonucleotides processively in the 3'- to 5'-direction.</text>
</comment>
<comment type="catalytic activity">
    <reaction evidence="1">
        <text>RNA(n+1) + phosphate = RNA(n) + a ribonucleoside 5'-diphosphate</text>
        <dbReference type="Rhea" id="RHEA:22096"/>
        <dbReference type="Rhea" id="RHEA-COMP:14527"/>
        <dbReference type="Rhea" id="RHEA-COMP:17342"/>
        <dbReference type="ChEBI" id="CHEBI:43474"/>
        <dbReference type="ChEBI" id="CHEBI:57930"/>
        <dbReference type="ChEBI" id="CHEBI:140395"/>
        <dbReference type="EC" id="2.7.7.8"/>
    </reaction>
</comment>
<comment type="cofactor">
    <cofactor evidence="1">
        <name>Mg(2+)</name>
        <dbReference type="ChEBI" id="CHEBI:18420"/>
    </cofactor>
</comment>
<comment type="subcellular location">
    <subcellularLocation>
        <location evidence="1">Cytoplasm</location>
    </subcellularLocation>
</comment>
<comment type="similarity">
    <text evidence="1">Belongs to the polyribonucleotide nucleotidyltransferase family.</text>
</comment>
<keyword id="KW-0963">Cytoplasm</keyword>
<keyword id="KW-0460">Magnesium</keyword>
<keyword id="KW-0479">Metal-binding</keyword>
<keyword id="KW-0548">Nucleotidyltransferase</keyword>
<keyword id="KW-1185">Reference proteome</keyword>
<keyword id="KW-0694">RNA-binding</keyword>
<keyword id="KW-0808">Transferase</keyword>
<organism>
    <name type="scientific">Pelotomaculum thermopropionicum (strain DSM 13744 / JCM 10971 / SI)</name>
    <dbReference type="NCBI Taxonomy" id="370438"/>
    <lineage>
        <taxon>Bacteria</taxon>
        <taxon>Bacillati</taxon>
        <taxon>Bacillota</taxon>
        <taxon>Clostridia</taxon>
        <taxon>Eubacteriales</taxon>
        <taxon>Desulfotomaculaceae</taxon>
        <taxon>Pelotomaculum</taxon>
    </lineage>
</organism>
<sequence length="734" mass="80315">MADRSILTREIIVGGRPMILETGRLANQASGAVFVRYGDTAVLVTATVAPTVRAGIDFFPLTVDYEERFYAVGKIPGGFIKRESRPSEKAILSGRLIDRPIRPLFPKEMRNEVQVIATILSVDQDNAPEIAAMVGASAALHISEIPLKFPIGGVIVGRVDGRFVINPVLAQAEKSDMHLVVAGTKDAVMMVEAGAKEVPEEVILEAISFGHETVKEIVAFIERYREEALEMGLAKEKMVIEVAEPDPVLVEAVTGPATEKLDGVLRRCVNERLSKQERDSLLNNIKDELMQKFLADYPEQESLIKDLLDSIEKKLVRRMITEEGLRIDGRALNEVRPISVEVGVLPRPHGSGLFTRGQTQILSVVTLGTVSEEQILDGLGVEESKRFMHHYNFPPYSTGETRPLRSPGRREIGHGALAERALAAVIPGEEEFPYTIRIVSEALESNGSTSMGSVCGSTLALMDAGVPISAPVAGVAMGLIKEGDNFTVLTDIQGFEDHLGDMDFKVAGTAKGITALQMDIKIPGITREVFEKALAQAYEGRMHILNKMLEVLPAPRPELSPHAPRIIHITIDPDKIRDVIGPGGKVIKKIVEETGAEIDIEDDGRVFIAAVDQEKGRKAQEIIETLTKEVQTGEIYTGRVTRITDFGCFVEIIPGVLGMQGKEGLVHISQLAHHRVNRVEDVVKEGDVILVKVTGYDSQGRLKLSKKEATPPPESTAMKEGRAHRPSRRRESAR</sequence>